<gene>
    <name evidence="1" type="primary">cca</name>
    <name type="ordered locus">VV0571</name>
</gene>
<dbReference type="EC" id="2.7.7.72" evidence="1"/>
<dbReference type="EC" id="3.1.3.-" evidence="1"/>
<dbReference type="EC" id="3.1.4.-" evidence="1"/>
<dbReference type="EMBL" id="BA000037">
    <property type="protein sequence ID" value="BAC93335.1"/>
    <property type="status" value="ALT_INIT"/>
    <property type="molecule type" value="Genomic_DNA"/>
</dbReference>
<dbReference type="RefSeq" id="WP_011149478.1">
    <property type="nucleotide sequence ID" value="NC_005139.1"/>
</dbReference>
<dbReference type="SMR" id="Q7M7K5"/>
<dbReference type="STRING" id="672.VV93_v1c05130"/>
<dbReference type="KEGG" id="vvy:VV0571"/>
<dbReference type="PATRIC" id="fig|196600.6.peg.590"/>
<dbReference type="eggNOG" id="COG0617">
    <property type="taxonomic scope" value="Bacteria"/>
</dbReference>
<dbReference type="HOGENOM" id="CLU_015961_1_1_6"/>
<dbReference type="Proteomes" id="UP000002675">
    <property type="component" value="Chromosome I"/>
</dbReference>
<dbReference type="GO" id="GO:0005524">
    <property type="term" value="F:ATP binding"/>
    <property type="evidence" value="ECO:0007669"/>
    <property type="project" value="UniProtKB-UniRule"/>
</dbReference>
<dbReference type="GO" id="GO:0004810">
    <property type="term" value="F:CCA tRNA nucleotidyltransferase activity"/>
    <property type="evidence" value="ECO:0007669"/>
    <property type="project" value="UniProtKB-UniRule"/>
</dbReference>
<dbReference type="GO" id="GO:0004112">
    <property type="term" value="F:cyclic-nucleotide phosphodiesterase activity"/>
    <property type="evidence" value="ECO:0007669"/>
    <property type="project" value="UniProtKB-UniRule"/>
</dbReference>
<dbReference type="GO" id="GO:0000287">
    <property type="term" value="F:magnesium ion binding"/>
    <property type="evidence" value="ECO:0007669"/>
    <property type="project" value="UniProtKB-UniRule"/>
</dbReference>
<dbReference type="GO" id="GO:0016791">
    <property type="term" value="F:phosphatase activity"/>
    <property type="evidence" value="ECO:0007669"/>
    <property type="project" value="UniProtKB-UniRule"/>
</dbReference>
<dbReference type="GO" id="GO:0000049">
    <property type="term" value="F:tRNA binding"/>
    <property type="evidence" value="ECO:0007669"/>
    <property type="project" value="UniProtKB-UniRule"/>
</dbReference>
<dbReference type="GO" id="GO:0042245">
    <property type="term" value="P:RNA repair"/>
    <property type="evidence" value="ECO:0007669"/>
    <property type="project" value="UniProtKB-KW"/>
</dbReference>
<dbReference type="GO" id="GO:0001680">
    <property type="term" value="P:tRNA 3'-terminal CCA addition"/>
    <property type="evidence" value="ECO:0007669"/>
    <property type="project" value="UniProtKB-UniRule"/>
</dbReference>
<dbReference type="CDD" id="cd00077">
    <property type="entry name" value="HDc"/>
    <property type="match status" value="1"/>
</dbReference>
<dbReference type="CDD" id="cd05398">
    <property type="entry name" value="NT_ClassII-CCAase"/>
    <property type="match status" value="1"/>
</dbReference>
<dbReference type="FunFam" id="1.10.3090.10:FF:000001">
    <property type="entry name" value="Multifunctional CCA protein"/>
    <property type="match status" value="1"/>
</dbReference>
<dbReference type="Gene3D" id="3.30.460.10">
    <property type="entry name" value="Beta Polymerase, domain 2"/>
    <property type="match status" value="1"/>
</dbReference>
<dbReference type="Gene3D" id="1.10.3090.10">
    <property type="entry name" value="cca-adding enzyme, domain 2"/>
    <property type="match status" value="1"/>
</dbReference>
<dbReference type="HAMAP" id="MF_01261">
    <property type="entry name" value="CCA_bact_type1"/>
    <property type="match status" value="1"/>
</dbReference>
<dbReference type="HAMAP" id="MF_01262">
    <property type="entry name" value="CCA_bact_type2"/>
    <property type="match status" value="1"/>
</dbReference>
<dbReference type="InterPro" id="IPR012006">
    <property type="entry name" value="CCA_bact"/>
</dbReference>
<dbReference type="InterPro" id="IPR003607">
    <property type="entry name" value="HD/PDEase_dom"/>
</dbReference>
<dbReference type="InterPro" id="IPR006674">
    <property type="entry name" value="HD_domain"/>
</dbReference>
<dbReference type="InterPro" id="IPR043519">
    <property type="entry name" value="NT_sf"/>
</dbReference>
<dbReference type="InterPro" id="IPR002646">
    <property type="entry name" value="PolA_pol_head_dom"/>
</dbReference>
<dbReference type="InterPro" id="IPR032828">
    <property type="entry name" value="PolyA_RNA-bd"/>
</dbReference>
<dbReference type="InterPro" id="IPR050124">
    <property type="entry name" value="tRNA_CCA-adding_enzyme"/>
</dbReference>
<dbReference type="NCBIfam" id="NF008137">
    <property type="entry name" value="PRK10885.1"/>
    <property type="match status" value="1"/>
</dbReference>
<dbReference type="PANTHER" id="PTHR47545">
    <property type="entry name" value="MULTIFUNCTIONAL CCA PROTEIN"/>
    <property type="match status" value="1"/>
</dbReference>
<dbReference type="PANTHER" id="PTHR47545:SF1">
    <property type="entry name" value="MULTIFUNCTIONAL CCA PROTEIN"/>
    <property type="match status" value="1"/>
</dbReference>
<dbReference type="Pfam" id="PF01966">
    <property type="entry name" value="HD"/>
    <property type="match status" value="1"/>
</dbReference>
<dbReference type="Pfam" id="PF01743">
    <property type="entry name" value="PolyA_pol"/>
    <property type="match status" value="1"/>
</dbReference>
<dbReference type="Pfam" id="PF12627">
    <property type="entry name" value="PolyA_pol_RNAbd"/>
    <property type="match status" value="1"/>
</dbReference>
<dbReference type="PIRSF" id="PIRSF000813">
    <property type="entry name" value="CCA_bact"/>
    <property type="match status" value="1"/>
</dbReference>
<dbReference type="SUPFAM" id="SSF81301">
    <property type="entry name" value="Nucleotidyltransferase"/>
    <property type="match status" value="1"/>
</dbReference>
<dbReference type="SUPFAM" id="SSF81891">
    <property type="entry name" value="Poly A polymerase C-terminal region-like"/>
    <property type="match status" value="1"/>
</dbReference>
<dbReference type="PROSITE" id="PS51831">
    <property type="entry name" value="HD"/>
    <property type="match status" value="1"/>
</dbReference>
<name>CCA_VIBVY</name>
<protein>
    <recommendedName>
        <fullName evidence="1">Multifunctional CCA protein</fullName>
    </recommendedName>
    <domain>
        <recommendedName>
            <fullName evidence="1">CCA-adding enzyme</fullName>
            <ecNumber evidence="1">2.7.7.72</ecNumber>
        </recommendedName>
        <alternativeName>
            <fullName evidence="1">CCA tRNA nucleotidyltransferase</fullName>
        </alternativeName>
        <alternativeName>
            <fullName evidence="1">tRNA CCA-pyrophosphorylase</fullName>
        </alternativeName>
        <alternativeName>
            <fullName evidence="1">tRNA adenylyl-/cytidylyl-transferase</fullName>
        </alternativeName>
        <alternativeName>
            <fullName evidence="1">tRNA nucleotidyltransferase</fullName>
        </alternativeName>
        <alternativeName>
            <fullName evidence="1">tRNA-NT</fullName>
        </alternativeName>
    </domain>
    <domain>
        <recommendedName>
            <fullName evidence="1">2'-nucleotidase</fullName>
            <ecNumber evidence="1">3.1.3.-</ecNumber>
        </recommendedName>
    </domain>
    <domain>
        <recommendedName>
            <fullName evidence="1">2',3'-cyclic phosphodiesterase</fullName>
            <ecNumber evidence="1">3.1.4.-</ecNumber>
        </recommendedName>
    </domain>
    <domain>
        <recommendedName>
            <fullName evidence="1">Phosphatase</fullName>
            <ecNumber evidence="1">3.1.3.-</ecNumber>
        </recommendedName>
    </domain>
</protein>
<organism>
    <name type="scientific">Vibrio vulnificus (strain YJ016)</name>
    <dbReference type="NCBI Taxonomy" id="196600"/>
    <lineage>
        <taxon>Bacteria</taxon>
        <taxon>Pseudomonadati</taxon>
        <taxon>Pseudomonadota</taxon>
        <taxon>Gammaproteobacteria</taxon>
        <taxon>Vibrionales</taxon>
        <taxon>Vibrionaceae</taxon>
        <taxon>Vibrio</taxon>
    </lineage>
</organism>
<reference key="1">
    <citation type="journal article" date="2003" name="Genome Res.">
        <title>Comparative genome analysis of Vibrio vulnificus, a marine pathogen.</title>
        <authorList>
            <person name="Chen C.-Y."/>
            <person name="Wu K.-M."/>
            <person name="Chang Y.-C."/>
            <person name="Chang C.-H."/>
            <person name="Tsai H.-C."/>
            <person name="Liao T.-L."/>
            <person name="Liu Y.-M."/>
            <person name="Chen H.-J."/>
            <person name="Shen A.B.-T."/>
            <person name="Li J.-C."/>
            <person name="Su T.-L."/>
            <person name="Shao C.-P."/>
            <person name="Lee C.-T."/>
            <person name="Hor L.-I."/>
            <person name="Tsai S.-F."/>
        </authorList>
    </citation>
    <scope>NUCLEOTIDE SEQUENCE [LARGE SCALE GENOMIC DNA]</scope>
    <source>
        <strain>YJ016</strain>
    </source>
</reference>
<sequence length="407" mass="45575">MEVYLVGGAVRDKLLGIPVYDQDWVVVGATAEQMLNAGYSPVGKDFPVFLHPKTKQEYALARTERKTGQGYKGFECFFSPDVTLEEDLLRRDLTINAIAMDSQGVLYDPYGGQQDLQDRILRHVSEAFVEDPLRVLRVARFAAKLAPLGFRVADETMQLMQSIVASGELSALTAERVWQEWHKSLLTPAPQQFLAVLRQCGALAVVLPEIDALFGVPQPEKWHPEIDTGIHTLLVAEQAAKLSSSAVVRFAAQVHDLGKGVTPPSEWPSHKMHCHTGLKLIKQLCERVRVPNEFRDLALMVCEQHSNIHRAAELKPQTMVKIFNKLDVWRKAERLNDILLCCQADHAGRQGLQDHPYPQAERIQLAYQAALSVEVQSVIQDGFKGPAIRDEQERRRIEAVKAALLNA</sequence>
<keyword id="KW-0067">ATP-binding</keyword>
<keyword id="KW-0378">Hydrolase</keyword>
<keyword id="KW-0460">Magnesium</keyword>
<keyword id="KW-0479">Metal-binding</keyword>
<keyword id="KW-0511">Multifunctional enzyme</keyword>
<keyword id="KW-0533">Nickel</keyword>
<keyword id="KW-0547">Nucleotide-binding</keyword>
<keyword id="KW-0548">Nucleotidyltransferase</keyword>
<keyword id="KW-0692">RNA repair</keyword>
<keyword id="KW-0694">RNA-binding</keyword>
<keyword id="KW-0808">Transferase</keyword>
<keyword id="KW-0819">tRNA processing</keyword>
<feature type="chain" id="PRO_0000139006" description="Multifunctional CCA protein">
    <location>
        <begin position="1"/>
        <end position="407"/>
    </location>
</feature>
<feature type="domain" description="HD" evidence="1">
    <location>
        <begin position="228"/>
        <end position="329"/>
    </location>
</feature>
<feature type="binding site" evidence="1">
    <location>
        <position position="8"/>
    </location>
    <ligand>
        <name>ATP</name>
        <dbReference type="ChEBI" id="CHEBI:30616"/>
    </ligand>
</feature>
<feature type="binding site" evidence="1">
    <location>
        <position position="8"/>
    </location>
    <ligand>
        <name>CTP</name>
        <dbReference type="ChEBI" id="CHEBI:37563"/>
    </ligand>
</feature>
<feature type="binding site" evidence="1">
    <location>
        <position position="11"/>
    </location>
    <ligand>
        <name>ATP</name>
        <dbReference type="ChEBI" id="CHEBI:30616"/>
    </ligand>
</feature>
<feature type="binding site" evidence="1">
    <location>
        <position position="11"/>
    </location>
    <ligand>
        <name>CTP</name>
        <dbReference type="ChEBI" id="CHEBI:37563"/>
    </ligand>
</feature>
<feature type="binding site" evidence="1">
    <location>
        <position position="21"/>
    </location>
    <ligand>
        <name>Mg(2+)</name>
        <dbReference type="ChEBI" id="CHEBI:18420"/>
    </ligand>
</feature>
<feature type="binding site" evidence="1">
    <location>
        <position position="23"/>
    </location>
    <ligand>
        <name>Mg(2+)</name>
        <dbReference type="ChEBI" id="CHEBI:18420"/>
    </ligand>
</feature>
<feature type="binding site" evidence="1">
    <location>
        <position position="91"/>
    </location>
    <ligand>
        <name>ATP</name>
        <dbReference type="ChEBI" id="CHEBI:30616"/>
    </ligand>
</feature>
<feature type="binding site" evidence="1">
    <location>
        <position position="91"/>
    </location>
    <ligand>
        <name>CTP</name>
        <dbReference type="ChEBI" id="CHEBI:37563"/>
    </ligand>
</feature>
<feature type="binding site" evidence="1">
    <location>
        <position position="137"/>
    </location>
    <ligand>
        <name>ATP</name>
        <dbReference type="ChEBI" id="CHEBI:30616"/>
    </ligand>
</feature>
<feature type="binding site" evidence="1">
    <location>
        <position position="137"/>
    </location>
    <ligand>
        <name>CTP</name>
        <dbReference type="ChEBI" id="CHEBI:37563"/>
    </ligand>
</feature>
<feature type="binding site" evidence="1">
    <location>
        <position position="140"/>
    </location>
    <ligand>
        <name>ATP</name>
        <dbReference type="ChEBI" id="CHEBI:30616"/>
    </ligand>
</feature>
<feature type="binding site" evidence="1">
    <location>
        <position position="140"/>
    </location>
    <ligand>
        <name>CTP</name>
        <dbReference type="ChEBI" id="CHEBI:37563"/>
    </ligand>
</feature>
<accession>Q7M7K5</accession>
<evidence type="ECO:0000255" key="1">
    <source>
        <dbReference type="HAMAP-Rule" id="MF_01261"/>
    </source>
</evidence>
<evidence type="ECO:0000305" key="2"/>
<comment type="function">
    <text evidence="1">Catalyzes the addition and repair of the essential 3'-terminal CCA sequence in tRNAs without using a nucleic acid template. Adds these three nucleotides in the order of C, C, and A to the tRNA nucleotide-73, using CTP and ATP as substrates and producing inorganic pyrophosphate. tRNA 3'-terminal CCA addition is required both for tRNA processing and repair. Also involved in tRNA surveillance by mediating tandem CCA addition to generate a CCACCA at the 3' terminus of unstable tRNAs. While stable tRNAs receive only 3'-terminal CCA, unstable tRNAs are marked with CCACCA and rapidly degraded.</text>
</comment>
<comment type="catalytic activity">
    <reaction evidence="1">
        <text>a tRNA precursor + 2 CTP + ATP = a tRNA with a 3' CCA end + 3 diphosphate</text>
        <dbReference type="Rhea" id="RHEA:14433"/>
        <dbReference type="Rhea" id="RHEA-COMP:10465"/>
        <dbReference type="Rhea" id="RHEA-COMP:10468"/>
        <dbReference type="ChEBI" id="CHEBI:30616"/>
        <dbReference type="ChEBI" id="CHEBI:33019"/>
        <dbReference type="ChEBI" id="CHEBI:37563"/>
        <dbReference type="ChEBI" id="CHEBI:74896"/>
        <dbReference type="ChEBI" id="CHEBI:83071"/>
        <dbReference type="EC" id="2.7.7.72"/>
    </reaction>
</comment>
<comment type="catalytic activity">
    <reaction evidence="1">
        <text>a tRNA with a 3' CCA end + 2 CTP + ATP = a tRNA with a 3' CCACCA end + 3 diphosphate</text>
        <dbReference type="Rhea" id="RHEA:76235"/>
        <dbReference type="Rhea" id="RHEA-COMP:10468"/>
        <dbReference type="Rhea" id="RHEA-COMP:18655"/>
        <dbReference type="ChEBI" id="CHEBI:30616"/>
        <dbReference type="ChEBI" id="CHEBI:33019"/>
        <dbReference type="ChEBI" id="CHEBI:37563"/>
        <dbReference type="ChEBI" id="CHEBI:83071"/>
        <dbReference type="ChEBI" id="CHEBI:195187"/>
    </reaction>
    <physiologicalReaction direction="left-to-right" evidence="1">
        <dbReference type="Rhea" id="RHEA:76236"/>
    </physiologicalReaction>
</comment>
<comment type="cofactor">
    <cofactor evidence="1">
        <name>Mg(2+)</name>
        <dbReference type="ChEBI" id="CHEBI:18420"/>
    </cofactor>
    <text evidence="1">Magnesium is required for nucleotidyltransferase activity.</text>
</comment>
<comment type="cofactor">
    <cofactor evidence="1">
        <name>Ni(2+)</name>
        <dbReference type="ChEBI" id="CHEBI:49786"/>
    </cofactor>
    <text evidence="1">Nickel for phosphatase activity.</text>
</comment>
<comment type="subunit">
    <text evidence="1">Monomer. Can also form homodimers and oligomers.</text>
</comment>
<comment type="domain">
    <text evidence="1">Comprises two domains: an N-terminal domain containing the nucleotidyltransferase activity and a C-terminal HD domain associated with both phosphodiesterase and phosphatase activities.</text>
</comment>
<comment type="miscellaneous">
    <text evidence="1">A single active site specifically recognizes both ATP and CTP and is responsible for their addition.</text>
</comment>
<comment type="similarity">
    <text evidence="1">Belongs to the tRNA nucleotidyltransferase/poly(A) polymerase family. Bacterial CCA-adding enzyme type 1 subfamily.</text>
</comment>
<comment type="sequence caution" evidence="2">
    <conflict type="erroneous initiation">
        <sequence resource="EMBL-CDS" id="BAC93335"/>
    </conflict>
</comment>
<proteinExistence type="inferred from homology"/>